<name>PLSY_HYDS0</name>
<dbReference type="EC" id="2.3.1.275" evidence="1"/>
<dbReference type="EMBL" id="CP001130">
    <property type="protein sequence ID" value="ACG57872.1"/>
    <property type="molecule type" value="Genomic_DNA"/>
</dbReference>
<dbReference type="RefSeq" id="WP_012514228.1">
    <property type="nucleotide sequence ID" value="NC_011126.1"/>
</dbReference>
<dbReference type="SMR" id="B4U9R1"/>
<dbReference type="STRING" id="380749.HY04AAS1_1187"/>
<dbReference type="KEGG" id="hya:HY04AAS1_1187"/>
<dbReference type="eggNOG" id="COG0344">
    <property type="taxonomic scope" value="Bacteria"/>
</dbReference>
<dbReference type="HOGENOM" id="CLU_081254_7_1_0"/>
<dbReference type="OrthoDB" id="9777124at2"/>
<dbReference type="UniPathway" id="UPA00085"/>
<dbReference type="GO" id="GO:0005886">
    <property type="term" value="C:plasma membrane"/>
    <property type="evidence" value="ECO:0007669"/>
    <property type="project" value="UniProtKB-SubCell"/>
</dbReference>
<dbReference type="GO" id="GO:0043772">
    <property type="term" value="F:acyl-phosphate glycerol-3-phosphate acyltransferase activity"/>
    <property type="evidence" value="ECO:0007669"/>
    <property type="project" value="UniProtKB-UniRule"/>
</dbReference>
<dbReference type="GO" id="GO:0008654">
    <property type="term" value="P:phospholipid biosynthetic process"/>
    <property type="evidence" value="ECO:0007669"/>
    <property type="project" value="UniProtKB-UniRule"/>
</dbReference>
<dbReference type="HAMAP" id="MF_01043">
    <property type="entry name" value="PlsY"/>
    <property type="match status" value="1"/>
</dbReference>
<dbReference type="InterPro" id="IPR003811">
    <property type="entry name" value="G3P_acylTferase_PlsY"/>
</dbReference>
<dbReference type="NCBIfam" id="TIGR00023">
    <property type="entry name" value="glycerol-3-phosphate 1-O-acyltransferase PlsY"/>
    <property type="match status" value="1"/>
</dbReference>
<dbReference type="PANTHER" id="PTHR30309:SF0">
    <property type="entry name" value="GLYCEROL-3-PHOSPHATE ACYLTRANSFERASE-RELATED"/>
    <property type="match status" value="1"/>
</dbReference>
<dbReference type="PANTHER" id="PTHR30309">
    <property type="entry name" value="INNER MEMBRANE PROTEIN YGIH"/>
    <property type="match status" value="1"/>
</dbReference>
<dbReference type="Pfam" id="PF02660">
    <property type="entry name" value="G3P_acyltransf"/>
    <property type="match status" value="1"/>
</dbReference>
<dbReference type="SMART" id="SM01207">
    <property type="entry name" value="G3P_acyltransf"/>
    <property type="match status" value="1"/>
</dbReference>
<keyword id="KW-0997">Cell inner membrane</keyword>
<keyword id="KW-1003">Cell membrane</keyword>
<keyword id="KW-0444">Lipid biosynthesis</keyword>
<keyword id="KW-0443">Lipid metabolism</keyword>
<keyword id="KW-0472">Membrane</keyword>
<keyword id="KW-0594">Phospholipid biosynthesis</keyword>
<keyword id="KW-1208">Phospholipid metabolism</keyword>
<keyword id="KW-0808">Transferase</keyword>
<keyword id="KW-0812">Transmembrane</keyword>
<keyword id="KW-1133">Transmembrane helix</keyword>
<comment type="function">
    <text evidence="1">Catalyzes the transfer of an acyl group from acyl-phosphate (acyl-PO(4)) to glycerol-3-phosphate (G3P) to form lysophosphatidic acid (LPA). This enzyme utilizes acyl-phosphate as fatty acyl donor, but not acyl-CoA or acyl-ACP.</text>
</comment>
<comment type="catalytic activity">
    <reaction evidence="1">
        <text>an acyl phosphate + sn-glycerol 3-phosphate = a 1-acyl-sn-glycero-3-phosphate + phosphate</text>
        <dbReference type="Rhea" id="RHEA:34075"/>
        <dbReference type="ChEBI" id="CHEBI:43474"/>
        <dbReference type="ChEBI" id="CHEBI:57597"/>
        <dbReference type="ChEBI" id="CHEBI:57970"/>
        <dbReference type="ChEBI" id="CHEBI:59918"/>
        <dbReference type="EC" id="2.3.1.275"/>
    </reaction>
</comment>
<comment type="pathway">
    <text evidence="1">Lipid metabolism; phospholipid metabolism.</text>
</comment>
<comment type="subunit">
    <text evidence="1">Probably interacts with PlsX.</text>
</comment>
<comment type="subcellular location">
    <subcellularLocation>
        <location evidence="1">Cell inner membrane</location>
        <topology evidence="1">Multi-pass membrane protein</topology>
    </subcellularLocation>
</comment>
<comment type="similarity">
    <text evidence="1">Belongs to the PlsY family.</text>
</comment>
<protein>
    <recommendedName>
        <fullName evidence="1">Glycerol-3-phosphate acyltransferase</fullName>
    </recommendedName>
    <alternativeName>
        <fullName evidence="1">Acyl-PO4 G3P acyltransferase</fullName>
    </alternativeName>
    <alternativeName>
        <fullName evidence="1">Acyl-phosphate--glycerol-3-phosphate acyltransferase</fullName>
    </alternativeName>
    <alternativeName>
        <fullName evidence="1">G3P acyltransferase</fullName>
        <shortName evidence="1">GPAT</shortName>
        <ecNumber evidence="1">2.3.1.275</ecNumber>
    </alternativeName>
    <alternativeName>
        <fullName evidence="1">Lysophosphatidic acid synthase</fullName>
        <shortName evidence="1">LPA synthase</shortName>
    </alternativeName>
</protein>
<reference key="1">
    <citation type="journal article" date="2009" name="J. Bacteriol.">
        <title>Complete and draft genome sequences of six members of the Aquificales.</title>
        <authorList>
            <person name="Reysenbach A.-L."/>
            <person name="Hamamura N."/>
            <person name="Podar M."/>
            <person name="Griffiths E."/>
            <person name="Ferreira S."/>
            <person name="Hochstein R."/>
            <person name="Heidelberg J."/>
            <person name="Johnson J."/>
            <person name="Mead D."/>
            <person name="Pohorille A."/>
            <person name="Sarmiento M."/>
            <person name="Schweighofer K."/>
            <person name="Seshadri R."/>
            <person name="Voytek M.A."/>
        </authorList>
    </citation>
    <scope>NUCLEOTIDE SEQUENCE [LARGE SCALE GENOMIC DNA]</scope>
    <source>
        <strain>Y04AAS1</strain>
    </source>
</reference>
<evidence type="ECO:0000255" key="1">
    <source>
        <dbReference type="HAMAP-Rule" id="MF_01043"/>
    </source>
</evidence>
<sequence length="196" mass="21760">MGFIIGFLLSVFGYLLGSILFAKIVASYKGIDITSVGSKSAGATNVTRTLGKKYGALVFLLDAFKGFLIAILDRFYIDPSSLWFGIVMVSPVIGHIYSYRSDFKGGKGVATAFGVVFGISPLLALKMFLVWAFVFYLFRYVSLASITSVLVGYFLFLEGDFSTSQKLGATMIAFLILYKHKDNVFRLLRKEEHKFK</sequence>
<proteinExistence type="inferred from homology"/>
<gene>
    <name evidence="1" type="primary">plsY</name>
    <name type="ordered locus">HY04AAS1_1187</name>
</gene>
<feature type="chain" id="PRO_1000149574" description="Glycerol-3-phosphate acyltransferase">
    <location>
        <begin position="1"/>
        <end position="196"/>
    </location>
</feature>
<feature type="transmembrane region" description="Helical" evidence="1">
    <location>
        <begin position="1"/>
        <end position="21"/>
    </location>
</feature>
<feature type="transmembrane region" description="Helical" evidence="1">
    <location>
        <begin position="53"/>
        <end position="73"/>
    </location>
</feature>
<feature type="transmembrane region" description="Helical" evidence="1">
    <location>
        <begin position="76"/>
        <end position="96"/>
    </location>
</feature>
<feature type="transmembrane region" description="Helical" evidence="1">
    <location>
        <begin position="115"/>
        <end position="135"/>
    </location>
</feature>
<feature type="transmembrane region" description="Helical" evidence="1">
    <location>
        <begin position="141"/>
        <end position="161"/>
    </location>
</feature>
<organism>
    <name type="scientific">Hydrogenobaculum sp. (strain Y04AAS1)</name>
    <dbReference type="NCBI Taxonomy" id="380749"/>
    <lineage>
        <taxon>Bacteria</taxon>
        <taxon>Pseudomonadati</taxon>
        <taxon>Aquificota</taxon>
        <taxon>Aquificia</taxon>
        <taxon>Aquificales</taxon>
        <taxon>Aquificaceae</taxon>
        <taxon>Hydrogenobaculum</taxon>
    </lineage>
</organism>
<accession>B4U9R1</accession>